<gene>
    <name type="ordered locus">RHE_CH02229</name>
</gene>
<evidence type="ECO:0000255" key="1">
    <source>
        <dbReference type="HAMAP-Rule" id="MF_00489"/>
    </source>
</evidence>
<keyword id="KW-1185">Reference proteome</keyword>
<reference key="1">
    <citation type="journal article" date="2006" name="Proc. Natl. Acad. Sci. U.S.A.">
        <title>The partitioned Rhizobium etli genome: genetic and metabolic redundancy in seven interacting replicons.</title>
        <authorList>
            <person name="Gonzalez V."/>
            <person name="Santamaria R.I."/>
            <person name="Bustos P."/>
            <person name="Hernandez-Gonzalez I."/>
            <person name="Medrano-Soto A."/>
            <person name="Moreno-Hagelsieb G."/>
            <person name="Janga S.C."/>
            <person name="Ramirez M.A."/>
            <person name="Jimenez-Jacinto V."/>
            <person name="Collado-Vides J."/>
            <person name="Davila G."/>
        </authorList>
    </citation>
    <scope>NUCLEOTIDE SEQUENCE [LARGE SCALE GENOMIC DNA]</scope>
    <source>
        <strain>ATCC 51251 / DSM 11541 / JCM 21823 / NBRC 15573 / CFN 42</strain>
    </source>
</reference>
<protein>
    <recommendedName>
        <fullName evidence="1">UPF0178 protein RHE_CH02229</fullName>
    </recommendedName>
</protein>
<proteinExistence type="inferred from homology"/>
<feature type="chain" id="PRO_0000241824" description="UPF0178 protein RHE_CH02229">
    <location>
        <begin position="1"/>
        <end position="155"/>
    </location>
</feature>
<accession>Q2K827</accession>
<organism>
    <name type="scientific">Rhizobium etli (strain ATCC 51251 / DSM 11541 / JCM 21823 / NBRC 15573 / CFN 42)</name>
    <dbReference type="NCBI Taxonomy" id="347834"/>
    <lineage>
        <taxon>Bacteria</taxon>
        <taxon>Pseudomonadati</taxon>
        <taxon>Pseudomonadota</taxon>
        <taxon>Alphaproteobacteria</taxon>
        <taxon>Hyphomicrobiales</taxon>
        <taxon>Rhizobiaceae</taxon>
        <taxon>Rhizobium/Agrobacterium group</taxon>
        <taxon>Rhizobium</taxon>
    </lineage>
</organism>
<dbReference type="EMBL" id="CP000133">
    <property type="protein sequence ID" value="ABC91009.1"/>
    <property type="molecule type" value="Genomic_DNA"/>
</dbReference>
<dbReference type="RefSeq" id="WP_011425490.1">
    <property type="nucleotide sequence ID" value="NC_007761.1"/>
</dbReference>
<dbReference type="KEGG" id="ret:RHE_CH02229"/>
<dbReference type="eggNOG" id="COG1671">
    <property type="taxonomic scope" value="Bacteria"/>
</dbReference>
<dbReference type="HOGENOM" id="CLU_106619_2_1_5"/>
<dbReference type="OrthoDB" id="9798918at2"/>
<dbReference type="Proteomes" id="UP000001936">
    <property type="component" value="Chromosome"/>
</dbReference>
<dbReference type="CDD" id="cd18720">
    <property type="entry name" value="PIN_YqxD-like"/>
    <property type="match status" value="1"/>
</dbReference>
<dbReference type="HAMAP" id="MF_00489">
    <property type="entry name" value="UPF0178"/>
    <property type="match status" value="1"/>
</dbReference>
<dbReference type="InterPro" id="IPR003791">
    <property type="entry name" value="UPF0178"/>
</dbReference>
<dbReference type="NCBIfam" id="NF001095">
    <property type="entry name" value="PRK00124.1"/>
    <property type="match status" value="1"/>
</dbReference>
<dbReference type="PANTHER" id="PTHR35146">
    <property type="entry name" value="UPF0178 PROTEIN YAII"/>
    <property type="match status" value="1"/>
</dbReference>
<dbReference type="PANTHER" id="PTHR35146:SF1">
    <property type="entry name" value="UPF0178 PROTEIN YAII"/>
    <property type="match status" value="1"/>
</dbReference>
<dbReference type="Pfam" id="PF02639">
    <property type="entry name" value="DUF188"/>
    <property type="match status" value="1"/>
</dbReference>
<name>Y2229_RHIEC</name>
<sequence>MIYVDADACPVKPEVLKVAERHGLEVTFVANSGLRPSRDPMVRNVIVSNAFDAADNWIAERAGAGDVVVTADVPLAVRCVATGAFVSGPTGRVFDETNIGMASAMRDLGAHLRETGESKGYNASFSPKDRSRFLETFDRLCRRAKSLAGETGGRP</sequence>
<comment type="similarity">
    <text evidence="1">Belongs to the UPF0178 family.</text>
</comment>